<keyword id="KW-0067">ATP-binding</keyword>
<keyword id="KW-0436">Ligase</keyword>
<keyword id="KW-0547">Nucleotide-binding</keyword>
<keyword id="KW-0648">Protein biosynthesis</keyword>
<reference key="1">
    <citation type="submission" date="2007-02" db="EMBL/GenBank/DDBJ databases">
        <title>Complete sequence of chromosome 1 of Rhodobacter sphaeroides ATCC 17029.</title>
        <authorList>
            <person name="Copeland A."/>
            <person name="Lucas S."/>
            <person name="Lapidus A."/>
            <person name="Barry K."/>
            <person name="Detter J.C."/>
            <person name="Glavina del Rio T."/>
            <person name="Hammon N."/>
            <person name="Israni S."/>
            <person name="Dalin E."/>
            <person name="Tice H."/>
            <person name="Pitluck S."/>
            <person name="Kiss H."/>
            <person name="Brettin T."/>
            <person name="Bruce D."/>
            <person name="Han C."/>
            <person name="Tapia R."/>
            <person name="Gilna P."/>
            <person name="Schmutz J."/>
            <person name="Larimer F."/>
            <person name="Land M."/>
            <person name="Hauser L."/>
            <person name="Kyrpides N."/>
            <person name="Mikhailova N."/>
            <person name="Richardson P."/>
            <person name="Mackenzie C."/>
            <person name="Choudhary M."/>
            <person name="Donohue T.J."/>
            <person name="Kaplan S."/>
        </authorList>
    </citation>
    <scope>NUCLEOTIDE SEQUENCE [LARGE SCALE GENOMIC DNA]</scope>
    <source>
        <strain>ATCC 17029 / ATH 2.4.9</strain>
    </source>
</reference>
<proteinExistence type="inferred from homology"/>
<protein>
    <recommendedName>
        <fullName evidence="1">Aspartyl/glutamyl-tRNA(Asn/Gln) amidotransferase subunit C</fullName>
        <shortName evidence="1">Asp/Glu-ADT subunit C</shortName>
        <ecNumber evidence="1">6.3.5.-</ecNumber>
    </recommendedName>
</protein>
<organism>
    <name type="scientific">Cereibacter sphaeroides (strain ATCC 17029 / ATH 2.4.9)</name>
    <name type="common">Rhodobacter sphaeroides</name>
    <dbReference type="NCBI Taxonomy" id="349101"/>
    <lineage>
        <taxon>Bacteria</taxon>
        <taxon>Pseudomonadati</taxon>
        <taxon>Pseudomonadota</taxon>
        <taxon>Alphaproteobacteria</taxon>
        <taxon>Rhodobacterales</taxon>
        <taxon>Paracoccaceae</taxon>
        <taxon>Cereibacter</taxon>
    </lineage>
</organism>
<dbReference type="EC" id="6.3.5.-" evidence="1"/>
<dbReference type="EMBL" id="CP000577">
    <property type="protein sequence ID" value="ABN76055.1"/>
    <property type="molecule type" value="Genomic_DNA"/>
</dbReference>
<dbReference type="RefSeq" id="WP_002719430.1">
    <property type="nucleotide sequence ID" value="NC_009049.1"/>
</dbReference>
<dbReference type="SMR" id="A3PI89"/>
<dbReference type="GeneID" id="67446042"/>
<dbReference type="KEGG" id="rsh:Rsph17029_0944"/>
<dbReference type="HOGENOM" id="CLU_105899_2_0_5"/>
<dbReference type="GO" id="GO:0050566">
    <property type="term" value="F:asparaginyl-tRNA synthase (glutamine-hydrolyzing) activity"/>
    <property type="evidence" value="ECO:0007669"/>
    <property type="project" value="RHEA"/>
</dbReference>
<dbReference type="GO" id="GO:0005524">
    <property type="term" value="F:ATP binding"/>
    <property type="evidence" value="ECO:0007669"/>
    <property type="project" value="UniProtKB-KW"/>
</dbReference>
<dbReference type="GO" id="GO:0050567">
    <property type="term" value="F:glutaminyl-tRNA synthase (glutamine-hydrolyzing) activity"/>
    <property type="evidence" value="ECO:0007669"/>
    <property type="project" value="UniProtKB-UniRule"/>
</dbReference>
<dbReference type="GO" id="GO:0070681">
    <property type="term" value="P:glutaminyl-tRNAGln biosynthesis via transamidation"/>
    <property type="evidence" value="ECO:0007669"/>
    <property type="project" value="TreeGrafter"/>
</dbReference>
<dbReference type="GO" id="GO:0006450">
    <property type="term" value="P:regulation of translational fidelity"/>
    <property type="evidence" value="ECO:0007669"/>
    <property type="project" value="InterPro"/>
</dbReference>
<dbReference type="GO" id="GO:0006412">
    <property type="term" value="P:translation"/>
    <property type="evidence" value="ECO:0007669"/>
    <property type="project" value="UniProtKB-UniRule"/>
</dbReference>
<dbReference type="Gene3D" id="1.10.20.60">
    <property type="entry name" value="Glu-tRNAGln amidotransferase C subunit, N-terminal domain"/>
    <property type="match status" value="1"/>
</dbReference>
<dbReference type="HAMAP" id="MF_00122">
    <property type="entry name" value="GatC"/>
    <property type="match status" value="1"/>
</dbReference>
<dbReference type="InterPro" id="IPR036113">
    <property type="entry name" value="Asp/Glu-ADT_sf_sub_c"/>
</dbReference>
<dbReference type="InterPro" id="IPR003837">
    <property type="entry name" value="GatC"/>
</dbReference>
<dbReference type="NCBIfam" id="TIGR00135">
    <property type="entry name" value="gatC"/>
    <property type="match status" value="1"/>
</dbReference>
<dbReference type="PANTHER" id="PTHR15004">
    <property type="entry name" value="GLUTAMYL-TRNA(GLN) AMIDOTRANSFERASE SUBUNIT C, MITOCHONDRIAL"/>
    <property type="match status" value="1"/>
</dbReference>
<dbReference type="PANTHER" id="PTHR15004:SF0">
    <property type="entry name" value="GLUTAMYL-TRNA(GLN) AMIDOTRANSFERASE SUBUNIT C, MITOCHONDRIAL"/>
    <property type="match status" value="1"/>
</dbReference>
<dbReference type="Pfam" id="PF02686">
    <property type="entry name" value="GatC"/>
    <property type="match status" value="1"/>
</dbReference>
<dbReference type="SUPFAM" id="SSF141000">
    <property type="entry name" value="Glu-tRNAGln amidotransferase C subunit"/>
    <property type="match status" value="1"/>
</dbReference>
<gene>
    <name evidence="1" type="primary">gatC</name>
    <name type="ordered locus">Rsph17029_0944</name>
</gene>
<name>GATC_CERS1</name>
<feature type="chain" id="PRO_1000016197" description="Aspartyl/glutamyl-tRNA(Asn/Gln) amidotransferase subunit C">
    <location>
        <begin position="1"/>
        <end position="95"/>
    </location>
</feature>
<accession>A3PI89</accession>
<evidence type="ECO:0000255" key="1">
    <source>
        <dbReference type="HAMAP-Rule" id="MF_00122"/>
    </source>
</evidence>
<sequence length="95" mass="10523">MSIDIETARRVAHLARIRVDEADLPALAGELSGILTFMEQLNEVDVEGIEPMTSVTPMRLKRRQDVVTDGDMQDKVLSNAPDAREGFFAVPKVVE</sequence>
<comment type="function">
    <text evidence="1">Allows the formation of correctly charged Asn-tRNA(Asn) or Gln-tRNA(Gln) through the transamidation of misacylated Asp-tRNA(Asn) or Glu-tRNA(Gln) in organisms which lack either or both of asparaginyl-tRNA or glutaminyl-tRNA synthetases. The reaction takes place in the presence of glutamine and ATP through an activated phospho-Asp-tRNA(Asn) or phospho-Glu-tRNA(Gln).</text>
</comment>
<comment type="catalytic activity">
    <reaction evidence="1">
        <text>L-glutamyl-tRNA(Gln) + L-glutamine + ATP + H2O = L-glutaminyl-tRNA(Gln) + L-glutamate + ADP + phosphate + H(+)</text>
        <dbReference type="Rhea" id="RHEA:17521"/>
        <dbReference type="Rhea" id="RHEA-COMP:9681"/>
        <dbReference type="Rhea" id="RHEA-COMP:9684"/>
        <dbReference type="ChEBI" id="CHEBI:15377"/>
        <dbReference type="ChEBI" id="CHEBI:15378"/>
        <dbReference type="ChEBI" id="CHEBI:29985"/>
        <dbReference type="ChEBI" id="CHEBI:30616"/>
        <dbReference type="ChEBI" id="CHEBI:43474"/>
        <dbReference type="ChEBI" id="CHEBI:58359"/>
        <dbReference type="ChEBI" id="CHEBI:78520"/>
        <dbReference type="ChEBI" id="CHEBI:78521"/>
        <dbReference type="ChEBI" id="CHEBI:456216"/>
    </reaction>
</comment>
<comment type="catalytic activity">
    <reaction evidence="1">
        <text>L-aspartyl-tRNA(Asn) + L-glutamine + ATP + H2O = L-asparaginyl-tRNA(Asn) + L-glutamate + ADP + phosphate + 2 H(+)</text>
        <dbReference type="Rhea" id="RHEA:14513"/>
        <dbReference type="Rhea" id="RHEA-COMP:9674"/>
        <dbReference type="Rhea" id="RHEA-COMP:9677"/>
        <dbReference type="ChEBI" id="CHEBI:15377"/>
        <dbReference type="ChEBI" id="CHEBI:15378"/>
        <dbReference type="ChEBI" id="CHEBI:29985"/>
        <dbReference type="ChEBI" id="CHEBI:30616"/>
        <dbReference type="ChEBI" id="CHEBI:43474"/>
        <dbReference type="ChEBI" id="CHEBI:58359"/>
        <dbReference type="ChEBI" id="CHEBI:78515"/>
        <dbReference type="ChEBI" id="CHEBI:78516"/>
        <dbReference type="ChEBI" id="CHEBI:456216"/>
    </reaction>
</comment>
<comment type="subunit">
    <text evidence="1">Heterotrimer of A, B and C subunits.</text>
</comment>
<comment type="similarity">
    <text evidence="1">Belongs to the GatC family.</text>
</comment>